<gene>
    <name evidence="1" type="primary">glk</name>
    <name type="ordered locus">EcE24377A_2678</name>
</gene>
<feature type="chain" id="PRO_1000060923" description="Glucokinase">
    <location>
        <begin position="1"/>
        <end position="321"/>
    </location>
</feature>
<feature type="binding site" evidence="1">
    <location>
        <begin position="8"/>
        <end position="13"/>
    </location>
    <ligand>
        <name>ATP</name>
        <dbReference type="ChEBI" id="CHEBI:30616"/>
    </ligand>
</feature>
<keyword id="KW-0067">ATP-binding</keyword>
<keyword id="KW-0963">Cytoplasm</keyword>
<keyword id="KW-0324">Glycolysis</keyword>
<keyword id="KW-0418">Kinase</keyword>
<keyword id="KW-0547">Nucleotide-binding</keyword>
<keyword id="KW-1185">Reference proteome</keyword>
<keyword id="KW-0808">Transferase</keyword>
<comment type="function">
    <text>Not highly important in E.coli as glucose is transported into the cell by the PTS system already as glucose 6-phosphate.</text>
</comment>
<comment type="catalytic activity">
    <reaction evidence="1">
        <text>D-glucose + ATP = D-glucose 6-phosphate + ADP + H(+)</text>
        <dbReference type="Rhea" id="RHEA:17825"/>
        <dbReference type="ChEBI" id="CHEBI:4167"/>
        <dbReference type="ChEBI" id="CHEBI:15378"/>
        <dbReference type="ChEBI" id="CHEBI:30616"/>
        <dbReference type="ChEBI" id="CHEBI:61548"/>
        <dbReference type="ChEBI" id="CHEBI:456216"/>
        <dbReference type="EC" id="2.7.1.2"/>
    </reaction>
</comment>
<comment type="subcellular location">
    <subcellularLocation>
        <location evidence="1">Cytoplasm</location>
    </subcellularLocation>
</comment>
<comment type="similarity">
    <text evidence="1">Belongs to the bacterial glucokinase family.</text>
</comment>
<dbReference type="EC" id="2.7.1.2" evidence="1"/>
<dbReference type="EMBL" id="CP000800">
    <property type="protein sequence ID" value="ABV21130.1"/>
    <property type="molecule type" value="Genomic_DNA"/>
</dbReference>
<dbReference type="RefSeq" id="WP_000170346.1">
    <property type="nucleotide sequence ID" value="NC_009801.1"/>
</dbReference>
<dbReference type="SMR" id="A7ZPJ8"/>
<dbReference type="GeneID" id="75202543"/>
<dbReference type="KEGG" id="ecw:EcE24377A_2678"/>
<dbReference type="HOGENOM" id="CLU_042582_1_0_6"/>
<dbReference type="Proteomes" id="UP000001122">
    <property type="component" value="Chromosome"/>
</dbReference>
<dbReference type="GO" id="GO:0005829">
    <property type="term" value="C:cytosol"/>
    <property type="evidence" value="ECO:0007669"/>
    <property type="project" value="TreeGrafter"/>
</dbReference>
<dbReference type="GO" id="GO:0005524">
    <property type="term" value="F:ATP binding"/>
    <property type="evidence" value="ECO:0007669"/>
    <property type="project" value="UniProtKB-UniRule"/>
</dbReference>
<dbReference type="GO" id="GO:0005536">
    <property type="term" value="F:D-glucose binding"/>
    <property type="evidence" value="ECO:0007669"/>
    <property type="project" value="InterPro"/>
</dbReference>
<dbReference type="GO" id="GO:0004340">
    <property type="term" value="F:glucokinase activity"/>
    <property type="evidence" value="ECO:0007669"/>
    <property type="project" value="UniProtKB-UniRule"/>
</dbReference>
<dbReference type="GO" id="GO:0006096">
    <property type="term" value="P:glycolytic process"/>
    <property type="evidence" value="ECO:0007669"/>
    <property type="project" value="UniProtKB-UniRule"/>
</dbReference>
<dbReference type="CDD" id="cd24008">
    <property type="entry name" value="ASKHA_NBD_GLK"/>
    <property type="match status" value="1"/>
</dbReference>
<dbReference type="FunFam" id="3.30.420.40:FF:000045">
    <property type="entry name" value="Glucokinase"/>
    <property type="match status" value="1"/>
</dbReference>
<dbReference type="FunFam" id="3.40.367.20:FF:000002">
    <property type="entry name" value="Glucokinase"/>
    <property type="match status" value="1"/>
</dbReference>
<dbReference type="Gene3D" id="3.30.420.40">
    <property type="match status" value="1"/>
</dbReference>
<dbReference type="Gene3D" id="3.40.367.20">
    <property type="match status" value="1"/>
</dbReference>
<dbReference type="HAMAP" id="MF_00524">
    <property type="entry name" value="Glucokinase"/>
    <property type="match status" value="1"/>
</dbReference>
<dbReference type="InterPro" id="IPR043129">
    <property type="entry name" value="ATPase_NBD"/>
</dbReference>
<dbReference type="InterPro" id="IPR050201">
    <property type="entry name" value="Bacterial_glucokinase"/>
</dbReference>
<dbReference type="InterPro" id="IPR003836">
    <property type="entry name" value="Glucokinase"/>
</dbReference>
<dbReference type="NCBIfam" id="TIGR00749">
    <property type="entry name" value="glk"/>
    <property type="match status" value="1"/>
</dbReference>
<dbReference type="NCBIfam" id="NF001414">
    <property type="entry name" value="PRK00292.1-1"/>
    <property type="match status" value="1"/>
</dbReference>
<dbReference type="NCBIfam" id="NF001416">
    <property type="entry name" value="PRK00292.1-3"/>
    <property type="match status" value="1"/>
</dbReference>
<dbReference type="PANTHER" id="PTHR47690">
    <property type="entry name" value="GLUCOKINASE"/>
    <property type="match status" value="1"/>
</dbReference>
<dbReference type="PANTHER" id="PTHR47690:SF1">
    <property type="entry name" value="GLUCOKINASE"/>
    <property type="match status" value="1"/>
</dbReference>
<dbReference type="Pfam" id="PF02685">
    <property type="entry name" value="Glucokinase"/>
    <property type="match status" value="1"/>
</dbReference>
<dbReference type="SUPFAM" id="SSF53067">
    <property type="entry name" value="Actin-like ATPase domain"/>
    <property type="match status" value="1"/>
</dbReference>
<accession>A7ZPJ8</accession>
<reference key="1">
    <citation type="journal article" date="2008" name="J. Bacteriol.">
        <title>The pangenome structure of Escherichia coli: comparative genomic analysis of E. coli commensal and pathogenic isolates.</title>
        <authorList>
            <person name="Rasko D.A."/>
            <person name="Rosovitz M.J."/>
            <person name="Myers G.S.A."/>
            <person name="Mongodin E.F."/>
            <person name="Fricke W.F."/>
            <person name="Gajer P."/>
            <person name="Crabtree J."/>
            <person name="Sebaihia M."/>
            <person name="Thomson N.R."/>
            <person name="Chaudhuri R."/>
            <person name="Henderson I.R."/>
            <person name="Sperandio V."/>
            <person name="Ravel J."/>
        </authorList>
    </citation>
    <scope>NUCLEOTIDE SEQUENCE [LARGE SCALE GENOMIC DNA]</scope>
    <source>
        <strain>E24377A / ETEC</strain>
    </source>
</reference>
<protein>
    <recommendedName>
        <fullName evidence="1">Glucokinase</fullName>
        <ecNumber evidence="1">2.7.1.2</ecNumber>
    </recommendedName>
    <alternativeName>
        <fullName evidence="1">Glucose kinase</fullName>
    </alternativeName>
</protein>
<sequence>MTKYALVGDVGGTNARLALCDIASGEISQAKTYSGLDYPSLEAVIRVYLEEHKVEVKDGCIAIACPITGDWVAMTNHTWAFSIAEMKKNLGFSHLEIINDFTAVSMAIPMLKKEHLIQFGGAEPVEGKPIAVYGAGTGLGVAHLVHVDKRWVSLPGEGGHVDFAPNSEEEAIILEILRAEIGHVSAERVLSGPGLVNLYRAIVKADNRLPENLKPKDITERALADSCTDCRRALSLFCVIMGRFGGNLALNLGTFGGVFIAGGIVPRFLEFFKASGFRAAFEDKGRFKEYVHDIPVYLIVHDNPGLLGSGAHLRQTLGHIL</sequence>
<evidence type="ECO:0000255" key="1">
    <source>
        <dbReference type="HAMAP-Rule" id="MF_00524"/>
    </source>
</evidence>
<proteinExistence type="inferred from homology"/>
<name>GLK_ECO24</name>
<organism>
    <name type="scientific">Escherichia coli O139:H28 (strain E24377A / ETEC)</name>
    <dbReference type="NCBI Taxonomy" id="331111"/>
    <lineage>
        <taxon>Bacteria</taxon>
        <taxon>Pseudomonadati</taxon>
        <taxon>Pseudomonadota</taxon>
        <taxon>Gammaproteobacteria</taxon>
        <taxon>Enterobacterales</taxon>
        <taxon>Enterobacteriaceae</taxon>
        <taxon>Escherichia</taxon>
    </lineage>
</organism>